<proteinExistence type="inferred from homology"/>
<name>RPOZ_BACVZ</name>
<reference key="1">
    <citation type="journal article" date="2007" name="Nat. Biotechnol.">
        <title>Comparative analysis of the complete genome sequence of the plant growth-promoting bacterium Bacillus amyloliquefaciens FZB42.</title>
        <authorList>
            <person name="Chen X.H."/>
            <person name="Koumoutsi A."/>
            <person name="Scholz R."/>
            <person name="Eisenreich A."/>
            <person name="Schneider K."/>
            <person name="Heinemeyer I."/>
            <person name="Morgenstern B."/>
            <person name="Voss B."/>
            <person name="Hess W.R."/>
            <person name="Reva O."/>
            <person name="Junge H."/>
            <person name="Voigt B."/>
            <person name="Jungblut P.R."/>
            <person name="Vater J."/>
            <person name="Suessmuth R."/>
            <person name="Liesegang H."/>
            <person name="Strittmatter A."/>
            <person name="Gottschalk G."/>
            <person name="Borriss R."/>
        </authorList>
    </citation>
    <scope>NUCLEOTIDE SEQUENCE [LARGE SCALE GENOMIC DNA]</scope>
    <source>
        <strain>DSM 23117 / BGSC 10A6 / LMG 26770 / FZB42</strain>
    </source>
</reference>
<sequence length="67" mass="7710">MLDPSIDSLMNKLDSKYTLVTVSARRAREMQIKKDQQIEHTISHKYVGKALEEIDAGLLSFEREDSE</sequence>
<gene>
    <name evidence="1" type="primary">rpoZ</name>
    <name type="ordered locus">RBAM_015520</name>
</gene>
<protein>
    <recommendedName>
        <fullName evidence="1">DNA-directed RNA polymerase subunit omega</fullName>
        <shortName evidence="1">RNAP omega subunit</shortName>
        <ecNumber evidence="1">2.7.7.6</ecNumber>
    </recommendedName>
    <alternativeName>
        <fullName evidence="1">RNA polymerase omega subunit</fullName>
    </alternativeName>
    <alternativeName>
        <fullName evidence="1">Transcriptase subunit omega</fullName>
    </alternativeName>
</protein>
<accession>A7Z4I9</accession>
<feature type="chain" id="PRO_1000005888" description="DNA-directed RNA polymerase subunit omega">
    <location>
        <begin position="1"/>
        <end position="67"/>
    </location>
</feature>
<evidence type="ECO:0000255" key="1">
    <source>
        <dbReference type="HAMAP-Rule" id="MF_00366"/>
    </source>
</evidence>
<keyword id="KW-0240">DNA-directed RNA polymerase</keyword>
<keyword id="KW-0548">Nucleotidyltransferase</keyword>
<keyword id="KW-0804">Transcription</keyword>
<keyword id="KW-0808">Transferase</keyword>
<organism>
    <name type="scientific">Bacillus velezensis (strain DSM 23117 / BGSC 10A6 / LMG 26770 / FZB42)</name>
    <name type="common">Bacillus amyloliquefaciens subsp. plantarum</name>
    <dbReference type="NCBI Taxonomy" id="326423"/>
    <lineage>
        <taxon>Bacteria</taxon>
        <taxon>Bacillati</taxon>
        <taxon>Bacillota</taxon>
        <taxon>Bacilli</taxon>
        <taxon>Bacillales</taxon>
        <taxon>Bacillaceae</taxon>
        <taxon>Bacillus</taxon>
        <taxon>Bacillus amyloliquefaciens group</taxon>
    </lineage>
</organism>
<comment type="function">
    <text evidence="1">Promotes RNA polymerase assembly. Latches the N- and C-terminal regions of the beta' subunit thereby facilitating its interaction with the beta and alpha subunits.</text>
</comment>
<comment type="catalytic activity">
    <reaction evidence="1">
        <text>RNA(n) + a ribonucleoside 5'-triphosphate = RNA(n+1) + diphosphate</text>
        <dbReference type="Rhea" id="RHEA:21248"/>
        <dbReference type="Rhea" id="RHEA-COMP:14527"/>
        <dbReference type="Rhea" id="RHEA-COMP:17342"/>
        <dbReference type="ChEBI" id="CHEBI:33019"/>
        <dbReference type="ChEBI" id="CHEBI:61557"/>
        <dbReference type="ChEBI" id="CHEBI:140395"/>
        <dbReference type="EC" id="2.7.7.6"/>
    </reaction>
</comment>
<comment type="subunit">
    <text evidence="1">The RNAP catalytic core consists of 2 alpha, 1 beta, 1 beta' and 1 omega subunit. When a sigma factor is associated with the core the holoenzyme is formed, which can initiate transcription.</text>
</comment>
<comment type="similarity">
    <text evidence="1">Belongs to the RNA polymerase subunit omega family.</text>
</comment>
<dbReference type="EC" id="2.7.7.6" evidence="1"/>
<dbReference type="EMBL" id="CP000560">
    <property type="protein sequence ID" value="ABS73915.1"/>
    <property type="molecule type" value="Genomic_DNA"/>
</dbReference>
<dbReference type="RefSeq" id="WP_003154346.1">
    <property type="nucleotide sequence ID" value="NC_009725.2"/>
</dbReference>
<dbReference type="SMR" id="A7Z4I9"/>
<dbReference type="GeneID" id="93080685"/>
<dbReference type="KEGG" id="bay:RBAM_015520"/>
<dbReference type="HOGENOM" id="CLU_125406_6_0_9"/>
<dbReference type="Proteomes" id="UP000001120">
    <property type="component" value="Chromosome"/>
</dbReference>
<dbReference type="GO" id="GO:0000428">
    <property type="term" value="C:DNA-directed RNA polymerase complex"/>
    <property type="evidence" value="ECO:0007669"/>
    <property type="project" value="UniProtKB-KW"/>
</dbReference>
<dbReference type="GO" id="GO:0003677">
    <property type="term" value="F:DNA binding"/>
    <property type="evidence" value="ECO:0007669"/>
    <property type="project" value="UniProtKB-UniRule"/>
</dbReference>
<dbReference type="GO" id="GO:0003899">
    <property type="term" value="F:DNA-directed RNA polymerase activity"/>
    <property type="evidence" value="ECO:0007669"/>
    <property type="project" value="UniProtKB-UniRule"/>
</dbReference>
<dbReference type="GO" id="GO:0006351">
    <property type="term" value="P:DNA-templated transcription"/>
    <property type="evidence" value="ECO:0007669"/>
    <property type="project" value="UniProtKB-UniRule"/>
</dbReference>
<dbReference type="Gene3D" id="3.90.940.10">
    <property type="match status" value="1"/>
</dbReference>
<dbReference type="HAMAP" id="MF_00366">
    <property type="entry name" value="RNApol_bact_RpoZ"/>
    <property type="match status" value="1"/>
</dbReference>
<dbReference type="InterPro" id="IPR003716">
    <property type="entry name" value="DNA-dir_RNA_pol_omega"/>
</dbReference>
<dbReference type="InterPro" id="IPR006110">
    <property type="entry name" value="Pol_omega/Rpo6/RPB6"/>
</dbReference>
<dbReference type="InterPro" id="IPR036161">
    <property type="entry name" value="RPB6/omega-like_sf"/>
</dbReference>
<dbReference type="NCBIfam" id="TIGR00690">
    <property type="entry name" value="rpoZ"/>
    <property type="match status" value="1"/>
</dbReference>
<dbReference type="PANTHER" id="PTHR34476">
    <property type="entry name" value="DNA-DIRECTED RNA POLYMERASE SUBUNIT OMEGA"/>
    <property type="match status" value="1"/>
</dbReference>
<dbReference type="PANTHER" id="PTHR34476:SF1">
    <property type="entry name" value="DNA-DIRECTED RNA POLYMERASE SUBUNIT OMEGA"/>
    <property type="match status" value="1"/>
</dbReference>
<dbReference type="Pfam" id="PF01192">
    <property type="entry name" value="RNA_pol_Rpb6"/>
    <property type="match status" value="1"/>
</dbReference>
<dbReference type="SMART" id="SM01409">
    <property type="entry name" value="RNA_pol_Rpb6"/>
    <property type="match status" value="1"/>
</dbReference>
<dbReference type="SUPFAM" id="SSF63562">
    <property type="entry name" value="RPB6/omega subunit-like"/>
    <property type="match status" value="1"/>
</dbReference>